<proteinExistence type="evidence at protein level"/>
<sequence length="109" mass="11797">PMTDLLAAGDISKAVSAFAAPESFNHKKFFELCGLKSKSKEIMQKVFHVLDQDQSGFIEKEELCLILKGFTPEGRSLSDKETTALLAAGDKDGDGKIGVDEFVTLVSES</sequence>
<organism>
    <name type="scientific">Pelophylax lessonae</name>
    <name type="common">Pool frog</name>
    <name type="synonym">Rana lessonae</name>
    <dbReference type="NCBI Taxonomy" id="45623"/>
    <lineage>
        <taxon>Eukaryota</taxon>
        <taxon>Metazoa</taxon>
        <taxon>Chordata</taxon>
        <taxon>Craniata</taxon>
        <taxon>Vertebrata</taxon>
        <taxon>Euteleostomi</taxon>
        <taxon>Amphibia</taxon>
        <taxon>Batrachia</taxon>
        <taxon>Anura</taxon>
        <taxon>Neobatrachia</taxon>
        <taxon>Ranoidea</taxon>
        <taxon>Ranidae</taxon>
        <taxon>Pelophylax</taxon>
    </lineage>
</organism>
<name>PRVA_PELLE</name>
<comment type="function">
    <text>In muscle, parvalbumin is thought to be involved in relaxation after contraction. It binds two calcium ions.</text>
</comment>
<comment type="miscellaneous">
    <text>This parvalbumin has an isoelectric point of 4.88.</text>
</comment>
<comment type="similarity">
    <text evidence="3">Belongs to the parvalbumin family.</text>
</comment>
<reference key="1">
    <citation type="journal article" date="1982" name="Eur. J. Biochem.">
        <title>Amino-acid sequence of an alpha-parvalbumin, pI = 4.88, from frog skeletal muscle.</title>
        <authorList>
            <person name="Jauregui-Adell J."/>
            <person name="Pechere J.-F."/>
            <person name="Briand G."/>
            <person name="Richet C."/>
            <person name="Demaille J.G."/>
        </authorList>
    </citation>
    <scope>PROTEIN SEQUENCE</scope>
</reference>
<reference key="2">
    <citation type="journal article" date="1987" name="Biochemistry">
        <title>Heat capacity and entropy changes of the two major isotypes of bullfrog (Rana catesbeiana) parvalbumins induced by calcium binding.</title>
        <authorList>
            <person name="Tanokura M."/>
            <person name="Yamada K."/>
        </authorList>
    </citation>
    <scope>CALCIUM-BINDING</scope>
</reference>
<evidence type="ECO:0000250" key="1">
    <source>
        <dbReference type="UniProtKB" id="P02628"/>
    </source>
</evidence>
<evidence type="ECO:0000255" key="2">
    <source>
        <dbReference type="PROSITE-ProRule" id="PRU00448"/>
    </source>
</evidence>
<evidence type="ECO:0000305" key="3"/>
<protein>
    <recommendedName>
        <fullName>Parvalbumin alpha</fullName>
    </recommendedName>
    <alternativeName>
        <fullName>Parvalbumin pI 4.88</fullName>
    </alternativeName>
</protein>
<accession>P02627</accession>
<dbReference type="PIR" id="A03062">
    <property type="entry name" value="PVFGA"/>
</dbReference>
<dbReference type="SMR" id="P02627"/>
<dbReference type="GO" id="GO:0005737">
    <property type="term" value="C:cytoplasm"/>
    <property type="evidence" value="ECO:0007669"/>
    <property type="project" value="TreeGrafter"/>
</dbReference>
<dbReference type="GO" id="GO:0005509">
    <property type="term" value="F:calcium ion binding"/>
    <property type="evidence" value="ECO:0007669"/>
    <property type="project" value="InterPro"/>
</dbReference>
<dbReference type="CDD" id="cd16254">
    <property type="entry name" value="EFh_parvalbumin_alpha"/>
    <property type="match status" value="1"/>
</dbReference>
<dbReference type="FunFam" id="1.10.238.10:FF:000060">
    <property type="entry name" value="Parvalbumin, thymic"/>
    <property type="match status" value="1"/>
</dbReference>
<dbReference type="Gene3D" id="1.10.238.10">
    <property type="entry name" value="EF-hand"/>
    <property type="match status" value="1"/>
</dbReference>
<dbReference type="InterPro" id="IPR011992">
    <property type="entry name" value="EF-hand-dom_pair"/>
</dbReference>
<dbReference type="InterPro" id="IPR018247">
    <property type="entry name" value="EF_Hand_1_Ca_BS"/>
</dbReference>
<dbReference type="InterPro" id="IPR002048">
    <property type="entry name" value="EF_hand_dom"/>
</dbReference>
<dbReference type="InterPro" id="IPR008080">
    <property type="entry name" value="Parvalbumin"/>
</dbReference>
<dbReference type="PANTHER" id="PTHR11653">
    <property type="entry name" value="PARVALBUMIN ALPHA"/>
    <property type="match status" value="1"/>
</dbReference>
<dbReference type="PANTHER" id="PTHR11653:SF2">
    <property type="entry name" value="PARVALBUMIN ALPHA"/>
    <property type="match status" value="1"/>
</dbReference>
<dbReference type="Pfam" id="PF13499">
    <property type="entry name" value="EF-hand_7"/>
    <property type="match status" value="1"/>
</dbReference>
<dbReference type="PRINTS" id="PR01697">
    <property type="entry name" value="PARVALBUMIN"/>
</dbReference>
<dbReference type="SMART" id="SM00054">
    <property type="entry name" value="EFh"/>
    <property type="match status" value="2"/>
</dbReference>
<dbReference type="SUPFAM" id="SSF47473">
    <property type="entry name" value="EF-hand"/>
    <property type="match status" value="1"/>
</dbReference>
<dbReference type="PROSITE" id="PS00018">
    <property type="entry name" value="EF_HAND_1"/>
    <property type="match status" value="2"/>
</dbReference>
<dbReference type="PROSITE" id="PS50222">
    <property type="entry name" value="EF_HAND_2"/>
    <property type="match status" value="2"/>
</dbReference>
<feature type="chain" id="PRO_0000073599" description="Parvalbumin alpha">
    <location>
        <begin position="1"/>
        <end position="109"/>
    </location>
</feature>
<feature type="domain" description="EF-hand 1" evidence="2">
    <location>
        <begin position="38"/>
        <end position="73"/>
    </location>
</feature>
<feature type="domain" description="EF-hand 2" evidence="2">
    <location>
        <begin position="77"/>
        <end position="109"/>
    </location>
</feature>
<feature type="binding site" evidence="2">
    <location>
        <position position="51"/>
    </location>
    <ligand>
        <name>Ca(2+)</name>
        <dbReference type="ChEBI" id="CHEBI:29108"/>
        <label>1</label>
    </ligand>
</feature>
<feature type="binding site" evidence="2">
    <location>
        <position position="53"/>
    </location>
    <ligand>
        <name>Ca(2+)</name>
        <dbReference type="ChEBI" id="CHEBI:29108"/>
        <label>1</label>
    </ligand>
</feature>
<feature type="binding site" evidence="2">
    <location>
        <position position="55"/>
    </location>
    <ligand>
        <name>Ca(2+)</name>
        <dbReference type="ChEBI" id="CHEBI:29108"/>
        <label>1</label>
    </ligand>
</feature>
<feature type="binding site" evidence="1">
    <location>
        <position position="57"/>
    </location>
    <ligand>
        <name>Ca(2+)</name>
        <dbReference type="ChEBI" id="CHEBI:29108"/>
        <label>1</label>
    </ligand>
</feature>
<feature type="binding site" evidence="1">
    <location>
        <position position="59"/>
    </location>
    <ligand>
        <name>Ca(2+)</name>
        <dbReference type="ChEBI" id="CHEBI:29108"/>
        <label>1</label>
    </ligand>
</feature>
<feature type="binding site" evidence="2">
    <location>
        <position position="62"/>
    </location>
    <ligand>
        <name>Ca(2+)</name>
        <dbReference type="ChEBI" id="CHEBI:29108"/>
        <label>1</label>
    </ligand>
</feature>
<feature type="binding site" evidence="2">
    <location>
        <position position="90"/>
    </location>
    <ligand>
        <name>Ca(2+)</name>
        <dbReference type="ChEBI" id="CHEBI:29108"/>
        <label>2</label>
    </ligand>
</feature>
<feature type="binding site" evidence="2">
    <location>
        <position position="92"/>
    </location>
    <ligand>
        <name>Ca(2+)</name>
        <dbReference type="ChEBI" id="CHEBI:29108"/>
        <label>2</label>
    </ligand>
</feature>
<feature type="binding site" evidence="2">
    <location>
        <position position="94"/>
    </location>
    <ligand>
        <name>Ca(2+)</name>
        <dbReference type="ChEBI" id="CHEBI:29108"/>
        <label>2</label>
    </ligand>
</feature>
<feature type="binding site" evidence="2">
    <location>
        <position position="96"/>
    </location>
    <ligand>
        <name>Ca(2+)</name>
        <dbReference type="ChEBI" id="CHEBI:29108"/>
        <label>2</label>
    </ligand>
</feature>
<feature type="binding site" evidence="2">
    <location>
        <position position="101"/>
    </location>
    <ligand>
        <name>Ca(2+)</name>
        <dbReference type="ChEBI" id="CHEBI:29108"/>
        <label>2</label>
    </ligand>
</feature>
<keyword id="KW-0106">Calcium</keyword>
<keyword id="KW-0903">Direct protein sequencing</keyword>
<keyword id="KW-0479">Metal-binding</keyword>
<keyword id="KW-0514">Muscle protein</keyword>
<keyword id="KW-0677">Repeat</keyword>